<sequence>MENKWFLSMVRDDFKGGKINLEKAQKLLEKLDIQCNTIHVKCIFKDNDRLKQGRITIEEFRTIYRIIAHREEIIEIFNAYPENRKILFERNLIDFLTQEQYSLDINRSIVYEIIQKYEPIEEVKQAHQMSFEGFTRDMGSSECLLFNNECGSVYQDMTHPLSDYFISSSHNTYLISDQIMGPSNLWGYVSALVKGCRCLEIDCWDGSQNEPVVYHGYTLTSKLLFKTVIQAIHKYAFITSDYPVVLSLENHCSLSQQEVMADNLQSVFGDALLSDVLDDCPDRLPSPEALKFKILVRNKKIGTLKETHERKGFDKHGQVQECEEEEEAEQEEEENEVRDSEILDILQDDLEKEELKRGVGIKFFKKKKVKIATALSDLVIYTKVEKFRSFHYSRLYQQFNETNSIGETQARKLSKLRASEFILHTRKFITRIYPKATRADSSNFNPQEFWNIGCQMVALNFQTPGLPMDLQNGKFLENGNSGYILKPHFLRDGKSIFNPNKAPINSNPITLTIRLISGIQLPPSYHSSSNKADTLVIIEIFGVPNDQMKQQTRVIKKNAFSPRWNETFTFIIQVPELALIRFVVENQGLITGNEFLGQYTLPVLCMNKGYRRVPLFSKMGESLEPASLFIYVWYIR</sequence>
<dbReference type="EC" id="3.1.4.11"/>
<dbReference type="EMBL" id="AB113581">
    <property type="protein sequence ID" value="BAC78817.1"/>
    <property type="molecule type" value="mRNA"/>
</dbReference>
<dbReference type="SMR" id="Q7YRU3"/>
<dbReference type="FunCoup" id="Q7YRU3">
    <property type="interactions" value="423"/>
</dbReference>
<dbReference type="STRING" id="9823.ENSSSCP00000000621"/>
<dbReference type="PaxDb" id="9823-ENSSSCP00000000621"/>
<dbReference type="KEGG" id="ssc:397632"/>
<dbReference type="CTD" id="89869"/>
<dbReference type="eggNOG" id="KOG0169">
    <property type="taxonomic scope" value="Eukaryota"/>
</dbReference>
<dbReference type="InParanoid" id="Q7YRU3"/>
<dbReference type="OrthoDB" id="269822at2759"/>
<dbReference type="Proteomes" id="UP000008227">
    <property type="component" value="Unplaced"/>
</dbReference>
<dbReference type="Proteomes" id="UP000314985">
    <property type="component" value="Unplaced"/>
</dbReference>
<dbReference type="Proteomes" id="UP000694570">
    <property type="component" value="Unplaced"/>
</dbReference>
<dbReference type="Proteomes" id="UP000694571">
    <property type="component" value="Unplaced"/>
</dbReference>
<dbReference type="Proteomes" id="UP000694720">
    <property type="component" value="Unplaced"/>
</dbReference>
<dbReference type="Proteomes" id="UP000694722">
    <property type="component" value="Unplaced"/>
</dbReference>
<dbReference type="Proteomes" id="UP000694723">
    <property type="component" value="Unplaced"/>
</dbReference>
<dbReference type="Proteomes" id="UP000694724">
    <property type="component" value="Unplaced"/>
</dbReference>
<dbReference type="Proteomes" id="UP000694725">
    <property type="component" value="Unplaced"/>
</dbReference>
<dbReference type="Proteomes" id="UP000694726">
    <property type="component" value="Unplaced"/>
</dbReference>
<dbReference type="Proteomes" id="UP000694727">
    <property type="component" value="Unplaced"/>
</dbReference>
<dbReference type="Proteomes" id="UP000694728">
    <property type="component" value="Unplaced"/>
</dbReference>
<dbReference type="GO" id="GO:0005634">
    <property type="term" value="C:nucleus"/>
    <property type="evidence" value="ECO:0000318"/>
    <property type="project" value="GO_Central"/>
</dbReference>
<dbReference type="GO" id="GO:0048471">
    <property type="term" value="C:perinuclear region of cytoplasm"/>
    <property type="evidence" value="ECO:0007669"/>
    <property type="project" value="UniProtKB-SubCell"/>
</dbReference>
<dbReference type="GO" id="GO:0004435">
    <property type="term" value="F:phosphatidylinositol-4,5-bisphosphate phospholipase C activity"/>
    <property type="evidence" value="ECO:0000318"/>
    <property type="project" value="GO_Central"/>
</dbReference>
<dbReference type="GO" id="GO:0007343">
    <property type="term" value="P:egg activation"/>
    <property type="evidence" value="ECO:0000250"/>
    <property type="project" value="UniProtKB"/>
</dbReference>
<dbReference type="GO" id="GO:0035556">
    <property type="term" value="P:intracellular signal transduction"/>
    <property type="evidence" value="ECO:0007669"/>
    <property type="project" value="InterPro"/>
</dbReference>
<dbReference type="GO" id="GO:0016042">
    <property type="term" value="P:lipid catabolic process"/>
    <property type="evidence" value="ECO:0007669"/>
    <property type="project" value="UniProtKB-KW"/>
</dbReference>
<dbReference type="GO" id="GO:0060470">
    <property type="term" value="P:positive regulation of cytosolic calcium ion concentration involved in egg activation"/>
    <property type="evidence" value="ECO:0000318"/>
    <property type="project" value="GO_Central"/>
</dbReference>
<dbReference type="CDD" id="cd00275">
    <property type="entry name" value="C2_PLC_like"/>
    <property type="match status" value="1"/>
</dbReference>
<dbReference type="FunFam" id="1.10.238.10:FF:000005">
    <property type="entry name" value="Phosphoinositide phospholipase C"/>
    <property type="match status" value="1"/>
</dbReference>
<dbReference type="FunFam" id="1.10.238.10:FF:000357">
    <property type="entry name" value="Phosphoinositide phospholipase C"/>
    <property type="match status" value="1"/>
</dbReference>
<dbReference type="FunFam" id="2.60.40.150:FF:000147">
    <property type="entry name" value="Phosphoinositide phospholipase C"/>
    <property type="match status" value="1"/>
</dbReference>
<dbReference type="FunFam" id="3.20.20.190:FF:000027">
    <property type="entry name" value="Phosphoinositide phospholipase C"/>
    <property type="match status" value="1"/>
</dbReference>
<dbReference type="Gene3D" id="2.60.40.150">
    <property type="entry name" value="C2 domain"/>
    <property type="match status" value="1"/>
</dbReference>
<dbReference type="Gene3D" id="1.10.238.10">
    <property type="entry name" value="EF-hand"/>
    <property type="match status" value="2"/>
</dbReference>
<dbReference type="Gene3D" id="3.20.20.190">
    <property type="entry name" value="Phosphatidylinositol (PI) phosphodiesterase"/>
    <property type="match status" value="1"/>
</dbReference>
<dbReference type="InterPro" id="IPR000008">
    <property type="entry name" value="C2_dom"/>
</dbReference>
<dbReference type="InterPro" id="IPR035892">
    <property type="entry name" value="C2_domain_sf"/>
</dbReference>
<dbReference type="InterPro" id="IPR011992">
    <property type="entry name" value="EF-hand-dom_pair"/>
</dbReference>
<dbReference type="InterPro" id="IPR001192">
    <property type="entry name" value="PI-PLC_fam"/>
</dbReference>
<dbReference type="InterPro" id="IPR017946">
    <property type="entry name" value="PLC-like_Pdiesterase_TIM-brl"/>
</dbReference>
<dbReference type="InterPro" id="IPR015359">
    <property type="entry name" value="PLC_EF-hand-like"/>
</dbReference>
<dbReference type="InterPro" id="IPR000909">
    <property type="entry name" value="PLipase_C_PInositol-sp_X_dom"/>
</dbReference>
<dbReference type="InterPro" id="IPR001711">
    <property type="entry name" value="PLipase_C_Pinositol-sp_Y"/>
</dbReference>
<dbReference type="PANTHER" id="PTHR10336:SF29">
    <property type="entry name" value="1-PHOSPHATIDYLINOSITOL 4,5-BISPHOSPHATE PHOSPHODIESTERASE ZETA-1"/>
    <property type="match status" value="1"/>
</dbReference>
<dbReference type="PANTHER" id="PTHR10336">
    <property type="entry name" value="PHOSPHOINOSITIDE-SPECIFIC PHOSPHOLIPASE C FAMILY PROTEIN"/>
    <property type="match status" value="1"/>
</dbReference>
<dbReference type="Pfam" id="PF00168">
    <property type="entry name" value="C2"/>
    <property type="match status" value="1"/>
</dbReference>
<dbReference type="Pfam" id="PF09279">
    <property type="entry name" value="EF-hand_like"/>
    <property type="match status" value="1"/>
</dbReference>
<dbReference type="Pfam" id="PF00388">
    <property type="entry name" value="PI-PLC-X"/>
    <property type="match status" value="1"/>
</dbReference>
<dbReference type="Pfam" id="PF00387">
    <property type="entry name" value="PI-PLC-Y"/>
    <property type="match status" value="1"/>
</dbReference>
<dbReference type="PRINTS" id="PR00390">
    <property type="entry name" value="PHPHLIPASEC"/>
</dbReference>
<dbReference type="SMART" id="SM00239">
    <property type="entry name" value="C2"/>
    <property type="match status" value="1"/>
</dbReference>
<dbReference type="SMART" id="SM00148">
    <property type="entry name" value="PLCXc"/>
    <property type="match status" value="1"/>
</dbReference>
<dbReference type="SMART" id="SM00149">
    <property type="entry name" value="PLCYc"/>
    <property type="match status" value="1"/>
</dbReference>
<dbReference type="SUPFAM" id="SSF49562">
    <property type="entry name" value="C2 domain (Calcium/lipid-binding domain, CaLB)"/>
    <property type="match status" value="1"/>
</dbReference>
<dbReference type="SUPFAM" id="SSF47473">
    <property type="entry name" value="EF-hand"/>
    <property type="match status" value="1"/>
</dbReference>
<dbReference type="SUPFAM" id="SSF51695">
    <property type="entry name" value="PLC-like phosphodiesterases"/>
    <property type="match status" value="1"/>
</dbReference>
<dbReference type="PROSITE" id="PS50004">
    <property type="entry name" value="C2"/>
    <property type="match status" value="1"/>
</dbReference>
<dbReference type="PROSITE" id="PS50007">
    <property type="entry name" value="PIPLC_X_DOMAIN"/>
    <property type="match status" value="1"/>
</dbReference>
<dbReference type="PROSITE" id="PS50008">
    <property type="entry name" value="PIPLC_Y_DOMAIN"/>
    <property type="match status" value="1"/>
</dbReference>
<evidence type="ECO:0000250" key="1">
    <source>
        <dbReference type="UniProtKB" id="P10688"/>
    </source>
</evidence>
<evidence type="ECO:0000250" key="2">
    <source>
        <dbReference type="UniProtKB" id="Q86YW0"/>
    </source>
</evidence>
<evidence type="ECO:0000250" key="3">
    <source>
        <dbReference type="UniProtKB" id="Q8K4D7"/>
    </source>
</evidence>
<evidence type="ECO:0000255" key="4"/>
<evidence type="ECO:0000255" key="5">
    <source>
        <dbReference type="PROSITE-ProRule" id="PRU00041"/>
    </source>
</evidence>
<evidence type="ECO:0000255" key="6">
    <source>
        <dbReference type="PROSITE-ProRule" id="PRU00270"/>
    </source>
</evidence>
<evidence type="ECO:0000255" key="7">
    <source>
        <dbReference type="PROSITE-ProRule" id="PRU00271"/>
    </source>
</evidence>
<evidence type="ECO:0000256" key="8">
    <source>
        <dbReference type="SAM" id="MobiDB-lite"/>
    </source>
</evidence>
<evidence type="ECO:0000269" key="9">
    <source>
    </source>
</evidence>
<evidence type="ECO:0000269" key="10">
    <source>
    </source>
</evidence>
<evidence type="ECO:0000305" key="11"/>
<evidence type="ECO:0000312" key="12">
    <source>
        <dbReference type="EMBL" id="BAC78817.1"/>
    </source>
</evidence>
<reference evidence="11 12" key="1">
    <citation type="journal article" date="2006" name="Reproduction">
        <title>Molecular cloning, testicular postnatal expression, and oocyte-activating potential of porcine phospholipase Czeta.</title>
        <authorList>
            <person name="Yoneda A."/>
            <person name="Kashima M."/>
            <person name="Yoshida S."/>
            <person name="Terada K."/>
            <person name="Nakagawa S."/>
            <person name="Sakamoto A."/>
            <person name="Hayakawa K."/>
            <person name="Suzuki K."/>
            <person name="Ueda J."/>
            <person name="Watanabe T."/>
        </authorList>
    </citation>
    <scope>NUCLEOTIDE SEQUENCE [MRNA]</scope>
    <scope>FUNCTION</scope>
    <scope>TISSUE SPECIFICITY</scope>
    <scope>DEVELOPMENTAL STAGE</scope>
    <source>
        <strain evidence="10">Landrace</strain>
        <tissue evidence="10">Testis</tissue>
    </source>
</reference>
<reference evidence="11" key="2">
    <citation type="journal article" date="2005" name="Dev. Biol.">
        <title>Functional, biochemical, and chromatographic characterization of the complete [Ca2+]i oscillation-inducing activity of porcine sperm.</title>
        <authorList>
            <person name="Kurokawa M."/>
            <person name="Sato K."/>
            <person name="Wu H."/>
            <person name="He C."/>
            <person name="Malcuit C."/>
            <person name="Black S.J."/>
            <person name="Fukami K."/>
            <person name="Fissore R.A."/>
        </authorList>
    </citation>
    <scope>FUNCTION</scope>
</reference>
<organism>
    <name type="scientific">Sus scrofa</name>
    <name type="common">Pig</name>
    <dbReference type="NCBI Taxonomy" id="9823"/>
    <lineage>
        <taxon>Eukaryota</taxon>
        <taxon>Metazoa</taxon>
        <taxon>Chordata</taxon>
        <taxon>Craniata</taxon>
        <taxon>Vertebrata</taxon>
        <taxon>Euteleostomi</taxon>
        <taxon>Mammalia</taxon>
        <taxon>Eutheria</taxon>
        <taxon>Laurasiatheria</taxon>
        <taxon>Artiodactyla</taxon>
        <taxon>Suina</taxon>
        <taxon>Suidae</taxon>
        <taxon>Sus</taxon>
    </lineage>
</organism>
<proteinExistence type="evidence at transcript level"/>
<comment type="function">
    <text evidence="2 3 9 10 11">The production of the second messenger molecules diacylglycerol (DAG) and inositol 1,4,5-trisphosphate (IP3) is mediated by activated phosphatidylinositol-specific phospholipase C enzymes. In vitro, hydrolyzes PtdIns(4,5)P2 in a Ca(2+)-dependent manner. Triggers intracellular Ca(2+) oscillations in oocytes solely during M phase and is involved in inducing oocyte activation and initiating embryonic development up to the blastocyst stage. Is therefore a strong candidate for the egg-activating soluble sperm factor that is transferred from the sperm into the egg cytoplasm following gamete membrane fusion. May exert an inhibitory effect on phospholipase-C-coupled processes that depend on calcium ions and protein kinase C, including CFTR trafficking and function.</text>
</comment>
<comment type="catalytic activity">
    <reaction evidence="3">
        <text>a 1,2-diacyl-sn-glycero-3-phospho-(1D-myo-inositol-4,5-bisphosphate) + H2O = 1D-myo-inositol 1,4,5-trisphosphate + a 1,2-diacyl-sn-glycerol + H(+)</text>
        <dbReference type="Rhea" id="RHEA:33179"/>
        <dbReference type="ChEBI" id="CHEBI:15377"/>
        <dbReference type="ChEBI" id="CHEBI:15378"/>
        <dbReference type="ChEBI" id="CHEBI:17815"/>
        <dbReference type="ChEBI" id="CHEBI:58456"/>
        <dbReference type="ChEBI" id="CHEBI:203600"/>
        <dbReference type="EC" id="3.1.4.11"/>
    </reaction>
    <physiologicalReaction direction="left-to-right" evidence="3">
        <dbReference type="Rhea" id="RHEA:33180"/>
    </physiologicalReaction>
</comment>
<comment type="cofactor">
    <cofactor evidence="3">
        <name>Ca(2+)</name>
        <dbReference type="ChEBI" id="CHEBI:29108"/>
    </cofactor>
</comment>
<comment type="subunit">
    <text evidence="3">Interacts via its C2 domain with PtdIns(3)P and, to a lesser extent, PtdIns(5)P in vitro.</text>
</comment>
<comment type="subcellular location">
    <subcellularLocation>
        <location evidence="3">Nucleus</location>
    </subcellularLocation>
    <subcellularLocation>
        <location evidence="3">Cytoplasm</location>
        <location evidence="3">Perinuclear region</location>
    </subcellularLocation>
    <text evidence="3">Exhibits alternative cytoplasmic/nuclear localization during development. Translocates from the pronucleus into cytoplasm upon nuclear envelope breakdown for mitosis and localizes again to the pronucleus at interphase following meiosis and mitosis (By similarity).</text>
</comment>
<comment type="tissue specificity">
    <text evidence="10">Expressed specifically in testis.</text>
</comment>
<comment type="developmental stage">
    <text evidence="10">In testes, detected only when the elongated spermatids have differentiated from 96 days after birth.</text>
</comment>
<comment type="domain">
    <text evidence="3">The EF-hand and C2 domains are essential for triggering Ca(2+) oscillating activity and the regulation of PLCZ1 enzyme activity.</text>
</comment>
<comment type="domain">
    <text evidence="3">The X-Y linker region between PI-PLC X-box and Y-box domains may be a target for proteolysis and may play an important regulatory role during fertilization.</text>
</comment>
<name>PLCZ1_PIG</name>
<feature type="chain" id="PRO_0000347247" description="1-phosphatidylinositol 4,5-bisphosphate phosphodiesterase zeta-1">
    <location>
        <begin position="1"/>
        <end position="636"/>
    </location>
</feature>
<feature type="domain" description="EF-hand" evidence="4">
    <location>
        <begin position="35"/>
        <end position="70"/>
    </location>
</feature>
<feature type="domain" description="PI-PLC X-box" evidence="6">
    <location>
        <begin position="155"/>
        <end position="299"/>
    </location>
</feature>
<feature type="domain" description="PI-PLC Y-box" evidence="7">
    <location>
        <begin position="375"/>
        <end position="491"/>
    </location>
</feature>
<feature type="domain" description="C2" evidence="5">
    <location>
        <begin position="491"/>
        <end position="617"/>
    </location>
</feature>
<feature type="region of interest" description="Disordered" evidence="8">
    <location>
        <begin position="311"/>
        <end position="338"/>
    </location>
</feature>
<feature type="coiled-coil region" evidence="4">
    <location>
        <begin position="318"/>
        <end position="345"/>
    </location>
</feature>
<feature type="compositionally biased region" description="Acidic residues" evidence="8">
    <location>
        <begin position="321"/>
        <end position="336"/>
    </location>
</feature>
<feature type="active site" evidence="1 6">
    <location>
        <position position="170"/>
    </location>
</feature>
<feature type="active site" evidence="1 6">
    <location>
        <position position="215"/>
    </location>
</feature>
<accession>Q7YRU3</accession>
<protein>
    <recommendedName>
        <fullName>1-phosphatidylinositol 4,5-bisphosphate phosphodiesterase zeta-1</fullName>
        <ecNumber>3.1.4.11</ecNumber>
    </recommendedName>
    <alternativeName>
        <fullName>Phosphoinositide phospholipase C-zeta-1</fullName>
    </alternativeName>
    <alternativeName>
        <fullName evidence="2">Phospholipase C-zeta-1</fullName>
        <shortName evidence="2">PLC-zeta-1</shortName>
    </alternativeName>
</protein>
<gene>
    <name evidence="12" type="primary">PLCZ</name>
</gene>
<keyword id="KW-0106">Calcium</keyword>
<keyword id="KW-0175">Coiled coil</keyword>
<keyword id="KW-0963">Cytoplasm</keyword>
<keyword id="KW-0217">Developmental protein</keyword>
<keyword id="KW-0278">Fertilization</keyword>
<keyword id="KW-0378">Hydrolase</keyword>
<keyword id="KW-0442">Lipid degradation</keyword>
<keyword id="KW-0443">Lipid metabolism</keyword>
<keyword id="KW-0539">Nucleus</keyword>
<keyword id="KW-1185">Reference proteome</keyword>
<keyword id="KW-0807">Transducer</keyword>